<name>NRDR_ECOLI</name>
<accession>P0A8D0</accession>
<accession>P25538</accession>
<accession>Q2MC13</accession>
<accession>Q3ZUB1</accession>
<sequence length="149" mass="17229">MHCPFCFAVDTKVIDSRLVGEGSSVRRRRQCLVCNERFTTFEVAELVMPRVVKSNDVREPFNEEKLRSGMLRALEKRPVSSDDVEMAINHIKSQLRATGEREVPSKMIGNLVMEQLKKLDKVAYIRFASVYRSFEDIKEFGEEIARLED</sequence>
<proteinExistence type="evidence at protein level"/>
<feature type="chain" id="PRO_0000182296" description="Transcriptional repressor NrdR">
    <location>
        <begin position="1"/>
        <end position="149"/>
    </location>
</feature>
<feature type="domain" description="ATP-cone">
    <location>
        <begin position="49"/>
        <end position="139"/>
    </location>
</feature>
<feature type="zinc finger region" evidence="1">
    <location>
        <begin position="3"/>
        <end position="34"/>
    </location>
</feature>
<dbReference type="EMBL" id="X64395">
    <property type="protein sequence ID" value="CAA45734.1"/>
    <property type="molecule type" value="Genomic_DNA"/>
</dbReference>
<dbReference type="EMBL" id="AM076828">
    <property type="protein sequence ID" value="CAJ28592.1"/>
    <property type="molecule type" value="Genomic_DNA"/>
</dbReference>
<dbReference type="EMBL" id="U82664">
    <property type="protein sequence ID" value="AAB40169.1"/>
    <property type="molecule type" value="Genomic_DNA"/>
</dbReference>
<dbReference type="EMBL" id="U00096">
    <property type="protein sequence ID" value="AAC73516.1"/>
    <property type="molecule type" value="Genomic_DNA"/>
</dbReference>
<dbReference type="EMBL" id="AP009048">
    <property type="protein sequence ID" value="BAE76193.1"/>
    <property type="molecule type" value="Genomic_DNA"/>
</dbReference>
<dbReference type="PIR" id="S26200">
    <property type="entry name" value="S26200"/>
</dbReference>
<dbReference type="RefSeq" id="NP_414947.1">
    <property type="nucleotide sequence ID" value="NC_000913.3"/>
</dbReference>
<dbReference type="RefSeq" id="WP_000543535.1">
    <property type="nucleotide sequence ID" value="NZ_STEB01000007.1"/>
</dbReference>
<dbReference type="SMR" id="P0A8D0"/>
<dbReference type="BioGRID" id="4259833">
    <property type="interactions" value="132"/>
</dbReference>
<dbReference type="BioGRID" id="851757">
    <property type="interactions" value="5"/>
</dbReference>
<dbReference type="DIP" id="DIP-31842N"/>
<dbReference type="FunCoup" id="P0A8D0">
    <property type="interactions" value="394"/>
</dbReference>
<dbReference type="IntAct" id="P0A8D0">
    <property type="interactions" value="18"/>
</dbReference>
<dbReference type="STRING" id="511145.b0413"/>
<dbReference type="jPOST" id="P0A8D0"/>
<dbReference type="PaxDb" id="511145-b0413"/>
<dbReference type="EnsemblBacteria" id="AAC73516">
    <property type="protein sequence ID" value="AAC73516"/>
    <property type="gene ID" value="b0413"/>
</dbReference>
<dbReference type="GeneID" id="93777047"/>
<dbReference type="GeneID" id="947437"/>
<dbReference type="KEGG" id="ecj:JW0403"/>
<dbReference type="KEGG" id="eco:b0413"/>
<dbReference type="KEGG" id="ecoc:C3026_02015"/>
<dbReference type="PATRIC" id="fig|511145.12.peg.429"/>
<dbReference type="EchoBASE" id="EB1296"/>
<dbReference type="eggNOG" id="COG1327">
    <property type="taxonomic scope" value="Bacteria"/>
</dbReference>
<dbReference type="HOGENOM" id="CLU_108412_0_0_6"/>
<dbReference type="InParanoid" id="P0A8D0"/>
<dbReference type="OMA" id="YRFTTYE"/>
<dbReference type="OrthoDB" id="9807461at2"/>
<dbReference type="PhylomeDB" id="P0A8D0"/>
<dbReference type="BioCyc" id="EcoCyc:EG11320-MONOMER"/>
<dbReference type="PRO" id="PR:P0A8D0"/>
<dbReference type="Proteomes" id="UP000000625">
    <property type="component" value="Chromosome"/>
</dbReference>
<dbReference type="GO" id="GO:0005524">
    <property type="term" value="F:ATP binding"/>
    <property type="evidence" value="ECO:0000314"/>
    <property type="project" value="EcoCyc"/>
</dbReference>
<dbReference type="GO" id="GO:0003690">
    <property type="term" value="F:double-stranded DNA binding"/>
    <property type="evidence" value="ECO:0000314"/>
    <property type="project" value="EcoCyc"/>
</dbReference>
<dbReference type="GO" id="GO:0008270">
    <property type="term" value="F:zinc ion binding"/>
    <property type="evidence" value="ECO:0007669"/>
    <property type="project" value="UniProtKB-UniRule"/>
</dbReference>
<dbReference type="GO" id="GO:0045892">
    <property type="term" value="P:negative regulation of DNA-templated transcription"/>
    <property type="evidence" value="ECO:0000315"/>
    <property type="project" value="EcoCyc"/>
</dbReference>
<dbReference type="HAMAP" id="MF_00440">
    <property type="entry name" value="NrdR"/>
    <property type="match status" value="1"/>
</dbReference>
<dbReference type="InterPro" id="IPR005144">
    <property type="entry name" value="ATP-cone_dom"/>
</dbReference>
<dbReference type="InterPro" id="IPR055173">
    <property type="entry name" value="NrdR-like_N"/>
</dbReference>
<dbReference type="InterPro" id="IPR003796">
    <property type="entry name" value="RNR_NrdR-like"/>
</dbReference>
<dbReference type="NCBIfam" id="TIGR00244">
    <property type="entry name" value="transcriptional regulator NrdR"/>
    <property type="match status" value="1"/>
</dbReference>
<dbReference type="PANTHER" id="PTHR30455">
    <property type="entry name" value="TRANSCRIPTIONAL REPRESSOR NRDR"/>
    <property type="match status" value="1"/>
</dbReference>
<dbReference type="PANTHER" id="PTHR30455:SF2">
    <property type="entry name" value="TRANSCRIPTIONAL REPRESSOR NRDR"/>
    <property type="match status" value="1"/>
</dbReference>
<dbReference type="Pfam" id="PF03477">
    <property type="entry name" value="ATP-cone"/>
    <property type="match status" value="1"/>
</dbReference>
<dbReference type="Pfam" id="PF22811">
    <property type="entry name" value="Zn_ribbon_NrdR"/>
    <property type="match status" value="1"/>
</dbReference>
<dbReference type="PROSITE" id="PS51161">
    <property type="entry name" value="ATP_CONE"/>
    <property type="match status" value="1"/>
</dbReference>
<comment type="function">
    <text evidence="2">Represses transcription of the class Ib RNR genes nrdHIEF but has much smaller effect on transcription of the class Ia RNR genes nrdAB and class III RNR genes nrdDG. By binding to nrdR boxes in the promoter regions to alter promoter activity, nrdR differentially regulates nrdAB, nrdHIEF and nrdD transcription in aerobic growth.</text>
</comment>
<comment type="cofactor">
    <cofactor evidence="1">
        <name>Zn(2+)</name>
        <dbReference type="ChEBI" id="CHEBI:29105"/>
    </cofactor>
    <text evidence="1">Binds 1 zinc ion.</text>
</comment>
<comment type="similarity">
    <text evidence="3">Belongs to the NrdR family.</text>
</comment>
<gene>
    <name type="primary">nrdR</name>
    <name type="synonym">ybaD</name>
    <name type="ordered locus">b0413</name>
    <name type="ordered locus">JW0403</name>
</gene>
<protein>
    <recommendedName>
        <fullName>Transcriptional repressor NrdR</fullName>
    </recommendedName>
</protein>
<keyword id="KW-0067">ATP-binding</keyword>
<keyword id="KW-0238">DNA-binding</keyword>
<keyword id="KW-0479">Metal-binding</keyword>
<keyword id="KW-0547">Nucleotide-binding</keyword>
<keyword id="KW-1185">Reference proteome</keyword>
<keyword id="KW-0678">Repressor</keyword>
<keyword id="KW-0804">Transcription</keyword>
<keyword id="KW-0805">Transcription regulation</keyword>
<keyword id="KW-0862">Zinc</keyword>
<keyword id="KW-0863">Zinc-finger</keyword>
<reference key="1">
    <citation type="journal article" date="1992" name="Mol. Gen. Genet.">
        <title>Insertional disruption of the nusB (ssyB) gene leads to cold-sensitive growth of Escherichia coli and suppression of the secY24 mutation.</title>
        <authorList>
            <person name="Taura T."/>
            <person name="Ueguchi C."/>
            <person name="Shiba K."/>
            <person name="Ito K."/>
        </authorList>
    </citation>
    <scope>NUCLEOTIDE SEQUENCE [GENOMIC DNA]</scope>
    <source>
        <strain>K12</strain>
    </source>
</reference>
<reference key="2">
    <citation type="submission" date="2005-08" db="EMBL/GenBank/DDBJ databases">
        <title>Phylogeny and distribution of nrdR orthologous genes in bacteria.</title>
        <authorList>
            <person name="Borovok I."/>
            <person name="Aharonowitz Y."/>
            <person name="Cohen G."/>
        </authorList>
    </citation>
    <scope>NUCLEOTIDE SEQUENCE [GENOMIC DNA]</scope>
    <source>
        <strain>K12</strain>
    </source>
</reference>
<reference key="3">
    <citation type="submission" date="1997-01" db="EMBL/GenBank/DDBJ databases">
        <title>Sequence of minutes 4-25 of Escherichia coli.</title>
        <authorList>
            <person name="Chung E."/>
            <person name="Allen E."/>
            <person name="Araujo R."/>
            <person name="Aparicio A.M."/>
            <person name="Davis K."/>
            <person name="Duncan M."/>
            <person name="Federspiel N."/>
            <person name="Hyman R."/>
            <person name="Kalman S."/>
            <person name="Komp C."/>
            <person name="Kurdi O."/>
            <person name="Lew H."/>
            <person name="Lin D."/>
            <person name="Namath A."/>
            <person name="Oefner P."/>
            <person name="Roberts D."/>
            <person name="Schramm S."/>
            <person name="Davis R.W."/>
        </authorList>
    </citation>
    <scope>NUCLEOTIDE SEQUENCE [LARGE SCALE GENOMIC DNA]</scope>
    <source>
        <strain>K12 / MG1655 / ATCC 47076</strain>
    </source>
</reference>
<reference key="4">
    <citation type="journal article" date="1997" name="Science">
        <title>The complete genome sequence of Escherichia coli K-12.</title>
        <authorList>
            <person name="Blattner F.R."/>
            <person name="Plunkett G. III"/>
            <person name="Bloch C.A."/>
            <person name="Perna N.T."/>
            <person name="Burland V."/>
            <person name="Riley M."/>
            <person name="Collado-Vides J."/>
            <person name="Glasner J.D."/>
            <person name="Rode C.K."/>
            <person name="Mayhew G.F."/>
            <person name="Gregor J."/>
            <person name="Davis N.W."/>
            <person name="Kirkpatrick H.A."/>
            <person name="Goeden M.A."/>
            <person name="Rose D.J."/>
            <person name="Mau B."/>
            <person name="Shao Y."/>
        </authorList>
    </citation>
    <scope>NUCLEOTIDE SEQUENCE [LARGE SCALE GENOMIC DNA]</scope>
    <source>
        <strain>K12 / MG1655 / ATCC 47076</strain>
    </source>
</reference>
<reference key="5">
    <citation type="journal article" date="2006" name="Mol. Syst. Biol.">
        <title>Highly accurate genome sequences of Escherichia coli K-12 strains MG1655 and W3110.</title>
        <authorList>
            <person name="Hayashi K."/>
            <person name="Morooka N."/>
            <person name="Yamamoto Y."/>
            <person name="Fujita K."/>
            <person name="Isono K."/>
            <person name="Choi S."/>
            <person name="Ohtsubo E."/>
            <person name="Baba T."/>
            <person name="Wanner B.L."/>
            <person name="Mori H."/>
            <person name="Horiuchi T."/>
        </authorList>
    </citation>
    <scope>NUCLEOTIDE SEQUENCE [LARGE SCALE GENOMIC DNA]</scope>
    <source>
        <strain>K12 / W3110 / ATCC 27325 / DSM 5911</strain>
    </source>
</reference>
<reference key="6">
    <citation type="journal article" date="2007" name="J. Bacteriol.">
        <title>NrdR controls differential expression of the Escherichia coli ribonucleotide reductase genes.</title>
        <authorList>
            <person name="Torrents E."/>
            <person name="Grinberg I."/>
            <person name="Gorovitz-Harris B."/>
            <person name="Lundstroem H."/>
            <person name="Borovok I."/>
            <person name="Aharonowitz Y."/>
            <person name="Sjoeberg B.M."/>
            <person name="Cohen G."/>
        </authorList>
    </citation>
    <scope>FUNCTION AS A REGULATOR OF RIBONUCLEOTIDE REDUCTASE GENES</scope>
    <source>
        <strain>K12 / MG1655 / ATCC 47076</strain>
    </source>
</reference>
<evidence type="ECO:0000250" key="1"/>
<evidence type="ECO:0000269" key="2">
    <source>
    </source>
</evidence>
<evidence type="ECO:0000305" key="3"/>
<organism>
    <name type="scientific">Escherichia coli (strain K12)</name>
    <dbReference type="NCBI Taxonomy" id="83333"/>
    <lineage>
        <taxon>Bacteria</taxon>
        <taxon>Pseudomonadati</taxon>
        <taxon>Pseudomonadota</taxon>
        <taxon>Gammaproteobacteria</taxon>
        <taxon>Enterobacterales</taxon>
        <taxon>Enterobacteriaceae</taxon>
        <taxon>Escherichia</taxon>
    </lineage>
</organism>